<dbReference type="EMBL" id="EF067920">
    <property type="protein sequence ID" value="ABK20625.1"/>
    <property type="molecule type" value="Genomic_DNA"/>
</dbReference>
<dbReference type="RefSeq" id="YP_874402.1">
    <property type="nucleotide sequence ID" value="NC_008588.1"/>
</dbReference>
<dbReference type="SMR" id="A0T0C7"/>
<dbReference type="STRING" id="556484.A0T0C7"/>
<dbReference type="GeneID" id="4524599"/>
<dbReference type="InParanoid" id="A0T0C7"/>
<dbReference type="Proteomes" id="UP000000759">
    <property type="component" value="Chloroplast"/>
</dbReference>
<dbReference type="GO" id="GO:0009507">
    <property type="term" value="C:chloroplast"/>
    <property type="evidence" value="ECO:0007669"/>
    <property type="project" value="UniProtKB-SubCell"/>
</dbReference>
<dbReference type="GO" id="GO:0005762">
    <property type="term" value="C:mitochondrial large ribosomal subunit"/>
    <property type="evidence" value="ECO:0007669"/>
    <property type="project" value="TreeGrafter"/>
</dbReference>
<dbReference type="GO" id="GO:0003735">
    <property type="term" value="F:structural constituent of ribosome"/>
    <property type="evidence" value="ECO:0007669"/>
    <property type="project" value="InterPro"/>
</dbReference>
<dbReference type="GO" id="GO:0006412">
    <property type="term" value="P:translation"/>
    <property type="evidence" value="ECO:0007669"/>
    <property type="project" value="UniProtKB-UniRule"/>
</dbReference>
<dbReference type="FunFam" id="2.30.30.790:FF:000004">
    <property type="entry name" value="50S ribosomal protein L19, chloroplastic"/>
    <property type="match status" value="1"/>
</dbReference>
<dbReference type="Gene3D" id="2.30.30.790">
    <property type="match status" value="1"/>
</dbReference>
<dbReference type="HAMAP" id="MF_00402">
    <property type="entry name" value="Ribosomal_bL19"/>
    <property type="match status" value="1"/>
</dbReference>
<dbReference type="InterPro" id="IPR001857">
    <property type="entry name" value="Ribosomal_bL19"/>
</dbReference>
<dbReference type="InterPro" id="IPR018257">
    <property type="entry name" value="Ribosomal_bL19_CS"/>
</dbReference>
<dbReference type="InterPro" id="IPR038657">
    <property type="entry name" value="Ribosomal_bL19_sf"/>
</dbReference>
<dbReference type="InterPro" id="IPR008991">
    <property type="entry name" value="Translation_prot_SH3-like_sf"/>
</dbReference>
<dbReference type="NCBIfam" id="TIGR01024">
    <property type="entry name" value="rplS_bact"/>
    <property type="match status" value="1"/>
</dbReference>
<dbReference type="PANTHER" id="PTHR15680:SF9">
    <property type="entry name" value="LARGE RIBOSOMAL SUBUNIT PROTEIN BL19M"/>
    <property type="match status" value="1"/>
</dbReference>
<dbReference type="PANTHER" id="PTHR15680">
    <property type="entry name" value="RIBOSOMAL PROTEIN L19"/>
    <property type="match status" value="1"/>
</dbReference>
<dbReference type="Pfam" id="PF01245">
    <property type="entry name" value="Ribosomal_L19"/>
    <property type="match status" value="1"/>
</dbReference>
<dbReference type="PIRSF" id="PIRSF002191">
    <property type="entry name" value="Ribosomal_L19"/>
    <property type="match status" value="1"/>
</dbReference>
<dbReference type="PRINTS" id="PR00061">
    <property type="entry name" value="RIBOSOMALL19"/>
</dbReference>
<dbReference type="SUPFAM" id="SSF50104">
    <property type="entry name" value="Translation proteins SH3-like domain"/>
    <property type="match status" value="1"/>
</dbReference>
<dbReference type="PROSITE" id="PS01015">
    <property type="entry name" value="RIBOSOMAL_L19"/>
    <property type="match status" value="1"/>
</dbReference>
<protein>
    <recommendedName>
        <fullName evidence="1">Large ribosomal subunit protein bL19c</fullName>
    </recommendedName>
    <alternativeName>
        <fullName evidence="2">50S ribosomal protein L19, chloroplastic</fullName>
    </alternativeName>
</protein>
<name>RK19_PHATC</name>
<sequence length="120" mass="13771">MLKLKTQKVIDAIESKFIKKDLPTLKIGDNVRIGVKIIEGTKERVQFYEGTIIAKKNSSINMTITVRKILQGIGIERVFLVHSPKIDSITVLRSSKVRRAKLYYLRNLRGKASRLKQTFK</sequence>
<feature type="chain" id="PRO_0000276396" description="Large ribosomal subunit protein bL19c">
    <location>
        <begin position="1"/>
        <end position="120"/>
    </location>
</feature>
<comment type="subcellular location">
    <subcellularLocation>
        <location>Plastid</location>
        <location>Chloroplast</location>
    </subcellularLocation>
</comment>
<comment type="similarity">
    <text evidence="1">Belongs to the bacterial ribosomal protein bL19 family.</text>
</comment>
<evidence type="ECO:0000255" key="1">
    <source>
        <dbReference type="HAMAP-Rule" id="MF_00402"/>
    </source>
</evidence>
<evidence type="ECO:0000305" key="2"/>
<reference key="1">
    <citation type="journal article" date="2007" name="Mol. Genet. Genomics">
        <title>Chloroplast genomes of the diatoms Phaeodactylum tricornutum and Thalassiosira pseudonana: comparison with other plastid genomes of the red lineage.</title>
        <authorList>
            <person name="Oudot-Le Secq M.-P."/>
            <person name="Grimwood J."/>
            <person name="Shapiro H."/>
            <person name="Armbrust E.V."/>
            <person name="Bowler C."/>
            <person name="Green B.R."/>
        </authorList>
    </citation>
    <scope>NUCLEOTIDE SEQUENCE [LARGE SCALE GENOMIC DNA]</scope>
    <source>
        <strain>CCAP 1055/1</strain>
    </source>
</reference>
<accession>A0T0C7</accession>
<organism>
    <name type="scientific">Phaeodactylum tricornutum (strain CCAP 1055/1)</name>
    <dbReference type="NCBI Taxonomy" id="556484"/>
    <lineage>
        <taxon>Eukaryota</taxon>
        <taxon>Sar</taxon>
        <taxon>Stramenopiles</taxon>
        <taxon>Ochrophyta</taxon>
        <taxon>Bacillariophyta</taxon>
        <taxon>Bacillariophyceae</taxon>
        <taxon>Bacillariophycidae</taxon>
        <taxon>Naviculales</taxon>
        <taxon>Phaeodactylaceae</taxon>
        <taxon>Phaeodactylum</taxon>
    </lineage>
</organism>
<proteinExistence type="inferred from homology"/>
<gene>
    <name evidence="1" type="primary">rpl19</name>
</gene>
<keyword id="KW-0150">Chloroplast</keyword>
<keyword id="KW-0934">Plastid</keyword>
<keyword id="KW-1185">Reference proteome</keyword>
<keyword id="KW-0687">Ribonucleoprotein</keyword>
<keyword id="KW-0689">Ribosomal protein</keyword>
<geneLocation type="chloroplast"/>